<reference key="1">
    <citation type="journal article" date="2003" name="Gene">
        <title>Translational machinery of channel catfish: II. Complementary DNA and expression of the complete set of 47 60S ribosomal proteins.</title>
        <authorList>
            <person name="Patterson A.P."/>
            <person name="Karsi A."/>
            <person name="Feng J."/>
            <person name="Liu Z.J."/>
        </authorList>
    </citation>
    <scope>NUCLEOTIDE SEQUENCE [MRNA]</scope>
</reference>
<keyword id="KW-0963">Cytoplasm</keyword>
<keyword id="KW-0687">Ribonucleoprotein</keyword>
<keyword id="KW-0689">Ribosomal protein</keyword>
<accession>Q90YV2</accession>
<sequence>MGAYKYMQELWRKKQSDVMRFLLRVRCWQYRQLSALHRAPRPTRPDKARRLGYKAKQGYVIYRVRVRRGGRKRPVPKGATYGKPVHHGVNQLKFARSLQSVAEERAGRHCGGLRVLNSYWVGEDSTYKFFEVILIDTFHKAIRRNPDTQWITKAVHKHREMRGLTSAGKKSRGLGKGHKFHLTIGGSRRAPWRRRNTLQLRRYR</sequence>
<evidence type="ECO:0000250" key="1"/>
<evidence type="ECO:0000250" key="2">
    <source>
        <dbReference type="UniProtKB" id="P61313"/>
    </source>
</evidence>
<evidence type="ECO:0000256" key="3">
    <source>
        <dbReference type="SAM" id="MobiDB-lite"/>
    </source>
</evidence>
<evidence type="ECO:0000305" key="4"/>
<comment type="function">
    <text evidence="2">Component of the large ribosomal subunit. The ribosome is a large ribonucleoprotein complex responsible for the synthesis of proteins in the cell.</text>
</comment>
<comment type="subunit">
    <text evidence="2">Component of the large ribosomal subunit.</text>
</comment>
<comment type="subcellular location">
    <subcellularLocation>
        <location evidence="2">Cytoplasm</location>
    </subcellularLocation>
</comment>
<comment type="similarity">
    <text evidence="4">Belongs to the eukaryotic ribosomal protein eL15 family.</text>
</comment>
<gene>
    <name type="primary">rpl15</name>
</gene>
<name>RL15_ICTPU</name>
<protein>
    <recommendedName>
        <fullName evidence="4">Large ribosomal subunit protein eL15</fullName>
    </recommendedName>
    <alternativeName>
        <fullName>60S ribosomal protein L15</fullName>
    </alternativeName>
</protein>
<proteinExistence type="evidence at transcript level"/>
<feature type="initiator methionine" description="Removed" evidence="1">
    <location>
        <position position="1"/>
    </location>
</feature>
<feature type="chain" id="PRO_0000127540" description="Large ribosomal subunit protein eL15">
    <location>
        <begin position="2"/>
        <end position="204"/>
    </location>
</feature>
<feature type="region of interest" description="Disordered" evidence="3">
    <location>
        <begin position="161"/>
        <end position="180"/>
    </location>
</feature>
<feature type="compositionally biased region" description="Basic residues" evidence="3">
    <location>
        <begin position="169"/>
        <end position="180"/>
    </location>
</feature>
<dbReference type="EMBL" id="AF401570">
    <property type="protein sequence ID" value="AAK95142.1"/>
    <property type="molecule type" value="mRNA"/>
</dbReference>
<dbReference type="RefSeq" id="NP_001187212.1">
    <property type="nucleotide sequence ID" value="NM_001200283.1"/>
</dbReference>
<dbReference type="SMR" id="Q90YV2"/>
<dbReference type="STRING" id="7998.ENSIPUP00000017374"/>
<dbReference type="GeneID" id="100305048"/>
<dbReference type="KEGG" id="ipu:100305048"/>
<dbReference type="CTD" id="6138"/>
<dbReference type="OrthoDB" id="10255148at2759"/>
<dbReference type="Proteomes" id="UP000221080">
    <property type="component" value="Chromosome 12"/>
</dbReference>
<dbReference type="GO" id="GO:0022625">
    <property type="term" value="C:cytosolic large ribosomal subunit"/>
    <property type="evidence" value="ECO:0007669"/>
    <property type="project" value="TreeGrafter"/>
</dbReference>
<dbReference type="GO" id="GO:0003723">
    <property type="term" value="F:RNA binding"/>
    <property type="evidence" value="ECO:0007669"/>
    <property type="project" value="TreeGrafter"/>
</dbReference>
<dbReference type="GO" id="GO:0003735">
    <property type="term" value="F:structural constituent of ribosome"/>
    <property type="evidence" value="ECO:0007669"/>
    <property type="project" value="InterPro"/>
</dbReference>
<dbReference type="GO" id="GO:0002181">
    <property type="term" value="P:cytoplasmic translation"/>
    <property type="evidence" value="ECO:0007669"/>
    <property type="project" value="TreeGrafter"/>
</dbReference>
<dbReference type="FunFam" id="3.40.1120.10:FF:000001">
    <property type="entry name" value="Ribosomal protein L15"/>
    <property type="match status" value="1"/>
</dbReference>
<dbReference type="Gene3D" id="3.40.1120.10">
    <property type="entry name" value="Ribosomal protein l15e"/>
    <property type="match status" value="1"/>
</dbReference>
<dbReference type="InterPro" id="IPR024794">
    <property type="entry name" value="Rbsml_eL15_core_dom_sf"/>
</dbReference>
<dbReference type="InterPro" id="IPR000439">
    <property type="entry name" value="Ribosomal_eL15"/>
</dbReference>
<dbReference type="InterPro" id="IPR020925">
    <property type="entry name" value="Ribosomal_eL15_CS"/>
</dbReference>
<dbReference type="InterPro" id="IPR012678">
    <property type="entry name" value="Ribosomal_uL23/eL15/eS24_sf"/>
</dbReference>
<dbReference type="NCBIfam" id="NF003269">
    <property type="entry name" value="PRK04243.1"/>
    <property type="match status" value="1"/>
</dbReference>
<dbReference type="PANTHER" id="PTHR11847:SF4">
    <property type="entry name" value="LARGE RIBOSOMAL SUBUNIT PROTEIN EL15"/>
    <property type="match status" value="1"/>
</dbReference>
<dbReference type="PANTHER" id="PTHR11847">
    <property type="entry name" value="RIBOSOMAL PROTEIN L15"/>
    <property type="match status" value="1"/>
</dbReference>
<dbReference type="Pfam" id="PF00827">
    <property type="entry name" value="Ribosomal_L15e"/>
    <property type="match status" value="1"/>
</dbReference>
<dbReference type="SMART" id="SM01384">
    <property type="entry name" value="Ribosomal_L15e"/>
    <property type="match status" value="1"/>
</dbReference>
<dbReference type="SUPFAM" id="SSF54189">
    <property type="entry name" value="Ribosomal proteins S24e, L23 and L15e"/>
    <property type="match status" value="1"/>
</dbReference>
<dbReference type="PROSITE" id="PS01194">
    <property type="entry name" value="RIBOSOMAL_L15E"/>
    <property type="match status" value="1"/>
</dbReference>
<organism>
    <name type="scientific">Ictalurus punctatus</name>
    <name type="common">Channel catfish</name>
    <name type="synonym">Silurus punctatus</name>
    <dbReference type="NCBI Taxonomy" id="7998"/>
    <lineage>
        <taxon>Eukaryota</taxon>
        <taxon>Metazoa</taxon>
        <taxon>Chordata</taxon>
        <taxon>Craniata</taxon>
        <taxon>Vertebrata</taxon>
        <taxon>Euteleostomi</taxon>
        <taxon>Actinopterygii</taxon>
        <taxon>Neopterygii</taxon>
        <taxon>Teleostei</taxon>
        <taxon>Ostariophysi</taxon>
        <taxon>Siluriformes</taxon>
        <taxon>Ictaluridae</taxon>
        <taxon>Ictalurus</taxon>
    </lineage>
</organism>